<evidence type="ECO:0000255" key="1">
    <source>
        <dbReference type="HAMAP-Rule" id="MF_01172"/>
    </source>
</evidence>
<sequence length="445" mass="49055">MKHFEANFDGLVGPTHNYAGLSFGNVASLNNAAATSSPKDAAKQGLKKAKALADLGLVQGMLAPQERPDLHTLRRIGFTGTDAAILNKAAKEAPALLRACCSASSMWTANAATVSPSADTHDGKLHFTPANLVDKLHRSIEPITTGNILQATFNDSRYFKHHQHLPEHTSFGDEGAANHTRLCEQYGHAGVELFVYGQETTNPSAPRPQKFPARQTLEASQAVARLHQLDDDCTVYIQQNPDVIDQGVFHNDVIAVGNQNVLFYHEQAFLNTQAKLTEIKRKFGESAIHFVEVPTSKVAIQDAVKSYLFNTQVVTLPSGEMAIIAPTNCQENPAVFAYLNELVTLDTPIKQVLYFDVKQSMQNGGGPACLRLRVAMNQDEVAAVNQHTLMNDAQFTRLNLWVDKHYRDRLLVEDLADPQLLLESRTALDELTQIMKLGSVYQFQR</sequence>
<dbReference type="EC" id="3.5.3.23" evidence="1"/>
<dbReference type="EMBL" id="CP000931">
    <property type="protein sequence ID" value="ABZ76170.1"/>
    <property type="molecule type" value="Genomic_DNA"/>
</dbReference>
<dbReference type="RefSeq" id="WP_012276708.1">
    <property type="nucleotide sequence ID" value="NC_010334.1"/>
</dbReference>
<dbReference type="SMR" id="B0TP13"/>
<dbReference type="STRING" id="458817.Shal_1604"/>
<dbReference type="KEGG" id="shl:Shal_1604"/>
<dbReference type="eggNOG" id="COG3724">
    <property type="taxonomic scope" value="Bacteria"/>
</dbReference>
<dbReference type="HOGENOM" id="CLU_053835_0_0_6"/>
<dbReference type="OrthoDB" id="248552at2"/>
<dbReference type="UniPathway" id="UPA00185">
    <property type="reaction ID" value="UER00280"/>
</dbReference>
<dbReference type="Proteomes" id="UP000001317">
    <property type="component" value="Chromosome"/>
</dbReference>
<dbReference type="GO" id="GO:0009015">
    <property type="term" value="F:N-succinylarginine dihydrolase activity"/>
    <property type="evidence" value="ECO:0007669"/>
    <property type="project" value="UniProtKB-UniRule"/>
</dbReference>
<dbReference type="GO" id="GO:0019544">
    <property type="term" value="P:arginine catabolic process to glutamate"/>
    <property type="evidence" value="ECO:0007669"/>
    <property type="project" value="UniProtKB-UniRule"/>
</dbReference>
<dbReference type="GO" id="GO:0019545">
    <property type="term" value="P:arginine catabolic process to succinate"/>
    <property type="evidence" value="ECO:0007669"/>
    <property type="project" value="UniProtKB-UniRule"/>
</dbReference>
<dbReference type="Gene3D" id="3.75.10.20">
    <property type="entry name" value="Succinylarginine dihydrolase"/>
    <property type="match status" value="1"/>
</dbReference>
<dbReference type="HAMAP" id="MF_01172">
    <property type="entry name" value="AstB"/>
    <property type="match status" value="1"/>
</dbReference>
<dbReference type="InterPro" id="IPR037031">
    <property type="entry name" value="AstB_sf"/>
</dbReference>
<dbReference type="InterPro" id="IPR007079">
    <property type="entry name" value="SuccinylArg_d-Hdrlase_AstB"/>
</dbReference>
<dbReference type="NCBIfam" id="TIGR03241">
    <property type="entry name" value="arg_catab_astB"/>
    <property type="match status" value="1"/>
</dbReference>
<dbReference type="NCBIfam" id="NF009789">
    <property type="entry name" value="PRK13281.1"/>
    <property type="match status" value="1"/>
</dbReference>
<dbReference type="PANTHER" id="PTHR30420">
    <property type="entry name" value="N-SUCCINYLARGININE DIHYDROLASE"/>
    <property type="match status" value="1"/>
</dbReference>
<dbReference type="PANTHER" id="PTHR30420:SF2">
    <property type="entry name" value="N-SUCCINYLARGININE DIHYDROLASE"/>
    <property type="match status" value="1"/>
</dbReference>
<dbReference type="Pfam" id="PF04996">
    <property type="entry name" value="AstB"/>
    <property type="match status" value="1"/>
</dbReference>
<dbReference type="SUPFAM" id="SSF55909">
    <property type="entry name" value="Pentein"/>
    <property type="match status" value="1"/>
</dbReference>
<feature type="chain" id="PRO_1000085398" description="N-succinylarginine dihydrolase">
    <location>
        <begin position="1"/>
        <end position="445"/>
    </location>
</feature>
<feature type="active site" evidence="1">
    <location>
        <position position="174"/>
    </location>
</feature>
<feature type="active site" evidence="1">
    <location>
        <position position="250"/>
    </location>
</feature>
<feature type="active site" description="Nucleophile" evidence="1">
    <location>
        <position position="369"/>
    </location>
</feature>
<feature type="binding site" evidence="1">
    <location>
        <begin position="19"/>
        <end position="28"/>
    </location>
    <ligand>
        <name>substrate</name>
    </ligand>
</feature>
<feature type="binding site" evidence="1">
    <location>
        <position position="110"/>
    </location>
    <ligand>
        <name>substrate</name>
    </ligand>
</feature>
<feature type="binding site" evidence="1">
    <location>
        <begin position="137"/>
        <end position="138"/>
    </location>
    <ligand>
        <name>substrate</name>
    </ligand>
</feature>
<feature type="binding site" evidence="1">
    <location>
        <position position="214"/>
    </location>
    <ligand>
        <name>substrate</name>
    </ligand>
</feature>
<feature type="binding site" evidence="1">
    <location>
        <position position="252"/>
    </location>
    <ligand>
        <name>substrate</name>
    </ligand>
</feature>
<feature type="binding site" evidence="1">
    <location>
        <position position="363"/>
    </location>
    <ligand>
        <name>substrate</name>
    </ligand>
</feature>
<gene>
    <name evidence="1" type="primary">astB</name>
    <name type="ordered locus">Shal_1604</name>
</gene>
<name>ASTB_SHEHH</name>
<protein>
    <recommendedName>
        <fullName evidence="1">N-succinylarginine dihydrolase</fullName>
        <ecNumber evidence="1">3.5.3.23</ecNumber>
    </recommendedName>
</protein>
<comment type="function">
    <text evidence="1">Catalyzes the hydrolysis of N(2)-succinylarginine into N(2)-succinylornithine, ammonia and CO(2).</text>
</comment>
<comment type="catalytic activity">
    <reaction evidence="1">
        <text>N(2)-succinyl-L-arginine + 2 H2O + 2 H(+) = N(2)-succinyl-L-ornithine + 2 NH4(+) + CO2</text>
        <dbReference type="Rhea" id="RHEA:19533"/>
        <dbReference type="ChEBI" id="CHEBI:15377"/>
        <dbReference type="ChEBI" id="CHEBI:15378"/>
        <dbReference type="ChEBI" id="CHEBI:16526"/>
        <dbReference type="ChEBI" id="CHEBI:28938"/>
        <dbReference type="ChEBI" id="CHEBI:58241"/>
        <dbReference type="ChEBI" id="CHEBI:58514"/>
        <dbReference type="EC" id="3.5.3.23"/>
    </reaction>
</comment>
<comment type="pathway">
    <text evidence="1">Amino-acid degradation; L-arginine degradation via AST pathway; L-glutamate and succinate from L-arginine: step 2/5.</text>
</comment>
<comment type="subunit">
    <text evidence="1">Homodimer.</text>
</comment>
<comment type="similarity">
    <text evidence="1">Belongs to the succinylarginine dihydrolase family.</text>
</comment>
<accession>B0TP13</accession>
<keyword id="KW-0056">Arginine metabolism</keyword>
<keyword id="KW-0378">Hydrolase</keyword>
<proteinExistence type="inferred from homology"/>
<reference key="1">
    <citation type="submission" date="2008-01" db="EMBL/GenBank/DDBJ databases">
        <title>Complete sequence of Shewanella halifaxensis HAW-EB4.</title>
        <authorList>
            <consortium name="US DOE Joint Genome Institute"/>
            <person name="Copeland A."/>
            <person name="Lucas S."/>
            <person name="Lapidus A."/>
            <person name="Glavina del Rio T."/>
            <person name="Dalin E."/>
            <person name="Tice H."/>
            <person name="Bruce D."/>
            <person name="Goodwin L."/>
            <person name="Pitluck S."/>
            <person name="Sims D."/>
            <person name="Brettin T."/>
            <person name="Detter J.C."/>
            <person name="Han C."/>
            <person name="Kuske C.R."/>
            <person name="Schmutz J."/>
            <person name="Larimer F."/>
            <person name="Land M."/>
            <person name="Hauser L."/>
            <person name="Kyrpides N."/>
            <person name="Kim E."/>
            <person name="Zhao J.-S."/>
            <person name="Richardson P."/>
        </authorList>
    </citation>
    <scope>NUCLEOTIDE SEQUENCE [LARGE SCALE GENOMIC DNA]</scope>
    <source>
        <strain>HAW-EB4</strain>
    </source>
</reference>
<organism>
    <name type="scientific">Shewanella halifaxensis (strain HAW-EB4)</name>
    <dbReference type="NCBI Taxonomy" id="458817"/>
    <lineage>
        <taxon>Bacteria</taxon>
        <taxon>Pseudomonadati</taxon>
        <taxon>Pseudomonadota</taxon>
        <taxon>Gammaproteobacteria</taxon>
        <taxon>Alteromonadales</taxon>
        <taxon>Shewanellaceae</taxon>
        <taxon>Shewanella</taxon>
    </lineage>
</organism>